<feature type="chain" id="PRO_0000243681" description="Large ribosomal subunit protein bL20">
    <location>
        <begin position="1"/>
        <end position="123"/>
    </location>
</feature>
<keyword id="KW-0687">Ribonucleoprotein</keyword>
<keyword id="KW-0689">Ribosomal protein</keyword>
<keyword id="KW-0694">RNA-binding</keyword>
<keyword id="KW-0699">rRNA-binding</keyword>
<accession>Q5HC39</accession>
<accession>Q5FCV0</accession>
<dbReference type="EMBL" id="CR767821">
    <property type="protein sequence ID" value="CAH57853.1"/>
    <property type="molecule type" value="Genomic_DNA"/>
</dbReference>
<dbReference type="EMBL" id="CR925678">
    <property type="protein sequence ID" value="CAI26627.1"/>
    <property type="molecule type" value="Genomic_DNA"/>
</dbReference>
<dbReference type="RefSeq" id="WP_011154821.1">
    <property type="nucleotide sequence ID" value="NC_005295.2"/>
</dbReference>
<dbReference type="SMR" id="Q5HC39"/>
<dbReference type="GeneID" id="33057533"/>
<dbReference type="KEGG" id="eru:Erum1370"/>
<dbReference type="KEGG" id="erw:ERWE_CDS_01330"/>
<dbReference type="eggNOG" id="COG0292">
    <property type="taxonomic scope" value="Bacteria"/>
</dbReference>
<dbReference type="HOGENOM" id="CLU_123265_0_1_5"/>
<dbReference type="Proteomes" id="UP000001021">
    <property type="component" value="Chromosome"/>
</dbReference>
<dbReference type="GO" id="GO:1990904">
    <property type="term" value="C:ribonucleoprotein complex"/>
    <property type="evidence" value="ECO:0007669"/>
    <property type="project" value="UniProtKB-KW"/>
</dbReference>
<dbReference type="GO" id="GO:0005840">
    <property type="term" value="C:ribosome"/>
    <property type="evidence" value="ECO:0007669"/>
    <property type="project" value="UniProtKB-KW"/>
</dbReference>
<dbReference type="GO" id="GO:0019843">
    <property type="term" value="F:rRNA binding"/>
    <property type="evidence" value="ECO:0007669"/>
    <property type="project" value="UniProtKB-UniRule"/>
</dbReference>
<dbReference type="GO" id="GO:0003735">
    <property type="term" value="F:structural constituent of ribosome"/>
    <property type="evidence" value="ECO:0007669"/>
    <property type="project" value="InterPro"/>
</dbReference>
<dbReference type="GO" id="GO:0000027">
    <property type="term" value="P:ribosomal large subunit assembly"/>
    <property type="evidence" value="ECO:0007669"/>
    <property type="project" value="UniProtKB-UniRule"/>
</dbReference>
<dbReference type="GO" id="GO:0006412">
    <property type="term" value="P:translation"/>
    <property type="evidence" value="ECO:0007669"/>
    <property type="project" value="InterPro"/>
</dbReference>
<dbReference type="CDD" id="cd07026">
    <property type="entry name" value="Ribosomal_L20"/>
    <property type="match status" value="1"/>
</dbReference>
<dbReference type="FunFam" id="1.10.1900.20:FF:000001">
    <property type="entry name" value="50S ribosomal protein L20"/>
    <property type="match status" value="1"/>
</dbReference>
<dbReference type="Gene3D" id="6.10.160.10">
    <property type="match status" value="1"/>
</dbReference>
<dbReference type="Gene3D" id="1.10.1900.20">
    <property type="entry name" value="Ribosomal protein L20"/>
    <property type="match status" value="1"/>
</dbReference>
<dbReference type="HAMAP" id="MF_00382">
    <property type="entry name" value="Ribosomal_bL20"/>
    <property type="match status" value="1"/>
</dbReference>
<dbReference type="InterPro" id="IPR005813">
    <property type="entry name" value="Ribosomal_bL20"/>
</dbReference>
<dbReference type="InterPro" id="IPR049946">
    <property type="entry name" value="RIBOSOMAL_L20_CS"/>
</dbReference>
<dbReference type="InterPro" id="IPR035566">
    <property type="entry name" value="Ribosomal_protein_bL20_C"/>
</dbReference>
<dbReference type="NCBIfam" id="TIGR01032">
    <property type="entry name" value="rplT_bact"/>
    <property type="match status" value="1"/>
</dbReference>
<dbReference type="PANTHER" id="PTHR10986">
    <property type="entry name" value="39S RIBOSOMAL PROTEIN L20"/>
    <property type="match status" value="1"/>
</dbReference>
<dbReference type="Pfam" id="PF00453">
    <property type="entry name" value="Ribosomal_L20"/>
    <property type="match status" value="1"/>
</dbReference>
<dbReference type="PRINTS" id="PR00062">
    <property type="entry name" value="RIBOSOMALL20"/>
</dbReference>
<dbReference type="SUPFAM" id="SSF74731">
    <property type="entry name" value="Ribosomal protein L20"/>
    <property type="match status" value="1"/>
</dbReference>
<dbReference type="PROSITE" id="PS00937">
    <property type="entry name" value="RIBOSOMAL_L20"/>
    <property type="match status" value="1"/>
</dbReference>
<organism>
    <name type="scientific">Ehrlichia ruminantium (strain Welgevonden)</name>
    <dbReference type="NCBI Taxonomy" id="254945"/>
    <lineage>
        <taxon>Bacteria</taxon>
        <taxon>Pseudomonadati</taxon>
        <taxon>Pseudomonadota</taxon>
        <taxon>Alphaproteobacteria</taxon>
        <taxon>Rickettsiales</taxon>
        <taxon>Anaplasmataceae</taxon>
        <taxon>Ehrlichia</taxon>
    </lineage>
</organism>
<proteinExistence type="inferred from homology"/>
<sequence>MARVKRGVTTRARHKKVIKLAKGYRGRSKNCYRVALQRVEKALQYAYRDRRNRKRFFRSLWIMRINAAVRQYGLLYSDFIYGLSLANITLNRKILADMAVHNKDNFKQIVDLTKEALTKSRVG</sequence>
<name>RL20_EHRRW</name>
<reference key="1">
    <citation type="journal article" date="2005" name="Proc. Natl. Acad. Sci. U.S.A.">
        <title>The genome of the heartwater agent Ehrlichia ruminantium contains multiple tandem repeats of actively variable copy number.</title>
        <authorList>
            <person name="Collins N.E."/>
            <person name="Liebenberg J."/>
            <person name="de Villiers E.P."/>
            <person name="Brayton K.A."/>
            <person name="Louw E."/>
            <person name="Pretorius A."/>
            <person name="Faber F.E."/>
            <person name="van Heerden H."/>
            <person name="Josemans A."/>
            <person name="van Kleef M."/>
            <person name="Steyn H.C."/>
            <person name="van Strijp M.F."/>
            <person name="Zweygarth E."/>
            <person name="Jongejan F."/>
            <person name="Maillard J.C."/>
            <person name="Berthier D."/>
            <person name="Botha M."/>
            <person name="Joubert F."/>
            <person name="Corton C.H."/>
            <person name="Thomson N.R."/>
            <person name="Allsopp M.T."/>
            <person name="Allsopp B.A."/>
        </authorList>
    </citation>
    <scope>NUCLEOTIDE SEQUENCE [LARGE SCALE GENOMIC DNA]</scope>
    <source>
        <strain>Welgevonden</strain>
    </source>
</reference>
<reference key="2">
    <citation type="journal article" date="2006" name="J. Bacteriol.">
        <title>Comparative genomic analysis of three strains of Ehrlichia ruminantium reveals an active process of genome size plasticity.</title>
        <authorList>
            <person name="Frutos R."/>
            <person name="Viari A."/>
            <person name="Ferraz C."/>
            <person name="Morgat A."/>
            <person name="Eychenie S."/>
            <person name="Kandassamy Y."/>
            <person name="Chantal I."/>
            <person name="Bensaid A."/>
            <person name="Coissac E."/>
            <person name="Vachiery N."/>
            <person name="Demaille J."/>
            <person name="Martinez D."/>
        </authorList>
    </citation>
    <scope>NUCLEOTIDE SEQUENCE [LARGE SCALE GENOMIC DNA]</scope>
    <source>
        <strain>Welgevonden</strain>
    </source>
</reference>
<comment type="function">
    <text evidence="1">Binds directly to 23S ribosomal RNA and is necessary for the in vitro assembly process of the 50S ribosomal subunit. It is not involved in the protein synthesizing functions of that subunit.</text>
</comment>
<comment type="similarity">
    <text evidence="1">Belongs to the bacterial ribosomal protein bL20 family.</text>
</comment>
<gene>
    <name evidence="1" type="primary">rplT</name>
    <name type="ordered locus">Erum1370</name>
    <name type="ordered locus">ERWE_CDS_01330</name>
</gene>
<evidence type="ECO:0000255" key="1">
    <source>
        <dbReference type="HAMAP-Rule" id="MF_00382"/>
    </source>
</evidence>
<evidence type="ECO:0000305" key="2"/>
<protein>
    <recommendedName>
        <fullName evidence="1">Large ribosomal subunit protein bL20</fullName>
    </recommendedName>
    <alternativeName>
        <fullName evidence="2">50S ribosomal protein L20</fullName>
    </alternativeName>
</protein>